<protein>
    <recommendedName>
        <fullName evidence="1">Glutamyl-tRNA reductase</fullName>
        <shortName evidence="1">GluTR</shortName>
        <ecNumber evidence="1">1.2.1.70</ecNumber>
    </recommendedName>
</protein>
<accession>B7I7P6</accession>
<organism>
    <name type="scientific">Acinetobacter baumannii (strain AB0057)</name>
    <dbReference type="NCBI Taxonomy" id="480119"/>
    <lineage>
        <taxon>Bacteria</taxon>
        <taxon>Pseudomonadati</taxon>
        <taxon>Pseudomonadota</taxon>
        <taxon>Gammaproteobacteria</taxon>
        <taxon>Moraxellales</taxon>
        <taxon>Moraxellaceae</taxon>
        <taxon>Acinetobacter</taxon>
        <taxon>Acinetobacter calcoaceticus/baumannii complex</taxon>
    </lineage>
</organism>
<evidence type="ECO:0000255" key="1">
    <source>
        <dbReference type="HAMAP-Rule" id="MF_00087"/>
    </source>
</evidence>
<reference key="1">
    <citation type="journal article" date="2008" name="J. Bacteriol.">
        <title>Comparative genome sequence analysis of multidrug-resistant Acinetobacter baumannii.</title>
        <authorList>
            <person name="Adams M.D."/>
            <person name="Goglin K."/>
            <person name="Molyneaux N."/>
            <person name="Hujer K.M."/>
            <person name="Lavender H."/>
            <person name="Jamison J.J."/>
            <person name="MacDonald I.J."/>
            <person name="Martin K.M."/>
            <person name="Russo T."/>
            <person name="Campagnari A.A."/>
            <person name="Hujer A.M."/>
            <person name="Bonomo R.A."/>
            <person name="Gill S.R."/>
        </authorList>
    </citation>
    <scope>NUCLEOTIDE SEQUENCE [LARGE SCALE GENOMIC DNA]</scope>
    <source>
        <strain>AB0057</strain>
    </source>
</reference>
<gene>
    <name evidence="1" type="primary">hemA</name>
    <name type="ordered locus">AB57_0887</name>
</gene>
<sequence length="427" mass="47964">MSFFALGVNHQTASVELREQIAFNAERLSNLLAEQRHHESLKDLVVVSTCNRTEVYAMAEDAESLLKWLADANNIDVKQLIHHVYRYENAQAITHLMRVASGLDSLMLGEPQILGQVKSALALSKEAQTVSPELNSVFEYAFYAAKRVRSETAVGSHAVSMGYAVAQLALQVFSKPEKLTVMVVAAGEMNSLVAKHLAEMGVAKMIICNRSRERADQLAQEIAHQVEVEIIDFSDLAENLYRADVVSSCTGSLHQVIAYADVKTALKKRRYQQMLMVDLAVPRDIDPKVESLDGVYLYGVDDLQSVIDENLAQRRQAAVEAEVMVNQLATQLITHQKVKEAGSTIHAYRQHSEEISQRELTHALEALHHGGNPEQVLQQFAHRLTQKLIHPTSMLLREAAKAESPDYFEWLQQHLQDVFDHERKPKR</sequence>
<keyword id="KW-0521">NADP</keyword>
<keyword id="KW-0560">Oxidoreductase</keyword>
<keyword id="KW-0627">Porphyrin biosynthesis</keyword>
<feature type="chain" id="PRO_1000190499" description="Glutamyl-tRNA reductase">
    <location>
        <begin position="1"/>
        <end position="427"/>
    </location>
</feature>
<feature type="active site" description="Nucleophile" evidence="1">
    <location>
        <position position="50"/>
    </location>
</feature>
<feature type="binding site" evidence="1">
    <location>
        <begin position="49"/>
        <end position="52"/>
    </location>
    <ligand>
        <name>substrate</name>
    </ligand>
</feature>
<feature type="binding site" evidence="1">
    <location>
        <position position="105"/>
    </location>
    <ligand>
        <name>substrate</name>
    </ligand>
</feature>
<feature type="binding site" evidence="1">
    <location>
        <begin position="110"/>
        <end position="112"/>
    </location>
    <ligand>
        <name>substrate</name>
    </ligand>
</feature>
<feature type="binding site" evidence="1">
    <location>
        <position position="116"/>
    </location>
    <ligand>
        <name>substrate</name>
    </ligand>
</feature>
<feature type="binding site" evidence="1">
    <location>
        <begin position="185"/>
        <end position="190"/>
    </location>
    <ligand>
        <name>NADP(+)</name>
        <dbReference type="ChEBI" id="CHEBI:58349"/>
    </ligand>
</feature>
<feature type="site" description="Important for activity" evidence="1">
    <location>
        <position position="95"/>
    </location>
</feature>
<comment type="function">
    <text evidence="1">Catalyzes the NADPH-dependent reduction of glutamyl-tRNA(Glu) to glutamate 1-semialdehyde (GSA).</text>
</comment>
<comment type="catalytic activity">
    <reaction evidence="1">
        <text>(S)-4-amino-5-oxopentanoate + tRNA(Glu) + NADP(+) = L-glutamyl-tRNA(Glu) + NADPH + H(+)</text>
        <dbReference type="Rhea" id="RHEA:12344"/>
        <dbReference type="Rhea" id="RHEA-COMP:9663"/>
        <dbReference type="Rhea" id="RHEA-COMP:9680"/>
        <dbReference type="ChEBI" id="CHEBI:15378"/>
        <dbReference type="ChEBI" id="CHEBI:57501"/>
        <dbReference type="ChEBI" id="CHEBI:57783"/>
        <dbReference type="ChEBI" id="CHEBI:58349"/>
        <dbReference type="ChEBI" id="CHEBI:78442"/>
        <dbReference type="ChEBI" id="CHEBI:78520"/>
        <dbReference type="EC" id="1.2.1.70"/>
    </reaction>
</comment>
<comment type="pathway">
    <text evidence="1">Porphyrin-containing compound metabolism; protoporphyrin-IX biosynthesis; 5-aminolevulinate from L-glutamyl-tRNA(Glu): step 1/2.</text>
</comment>
<comment type="subunit">
    <text evidence="1">Homodimer.</text>
</comment>
<comment type="domain">
    <text evidence="1">Possesses an unusual extended V-shaped dimeric structure with each monomer consisting of three distinct domains arranged along a curved 'spinal' alpha-helix. The N-terminal catalytic domain specifically recognizes the glutamate moiety of the substrate. The second domain is the NADPH-binding domain, and the third C-terminal domain is responsible for dimerization.</text>
</comment>
<comment type="miscellaneous">
    <text evidence="1">During catalysis, the active site Cys acts as a nucleophile attacking the alpha-carbonyl group of tRNA-bound glutamate with the formation of a thioester intermediate between enzyme and glutamate, and the concomitant release of tRNA(Glu). The thioester intermediate is finally reduced by direct hydride transfer from NADPH, to form the product GSA.</text>
</comment>
<comment type="similarity">
    <text evidence="1">Belongs to the glutamyl-tRNA reductase family.</text>
</comment>
<dbReference type="EC" id="1.2.1.70" evidence="1"/>
<dbReference type="EMBL" id="CP001182">
    <property type="protein sequence ID" value="ACJ40681.1"/>
    <property type="molecule type" value="Genomic_DNA"/>
</dbReference>
<dbReference type="RefSeq" id="WP_000007423.1">
    <property type="nucleotide sequence ID" value="NC_011586.2"/>
</dbReference>
<dbReference type="SMR" id="B7I7P6"/>
<dbReference type="KEGG" id="abn:AB57_0887"/>
<dbReference type="HOGENOM" id="CLU_035113_2_2_6"/>
<dbReference type="UniPathway" id="UPA00251">
    <property type="reaction ID" value="UER00316"/>
</dbReference>
<dbReference type="Proteomes" id="UP000007094">
    <property type="component" value="Chromosome"/>
</dbReference>
<dbReference type="GO" id="GO:0008883">
    <property type="term" value="F:glutamyl-tRNA reductase activity"/>
    <property type="evidence" value="ECO:0007669"/>
    <property type="project" value="UniProtKB-UniRule"/>
</dbReference>
<dbReference type="GO" id="GO:0050661">
    <property type="term" value="F:NADP binding"/>
    <property type="evidence" value="ECO:0007669"/>
    <property type="project" value="InterPro"/>
</dbReference>
<dbReference type="GO" id="GO:0019353">
    <property type="term" value="P:protoporphyrinogen IX biosynthetic process from glutamate"/>
    <property type="evidence" value="ECO:0007669"/>
    <property type="project" value="TreeGrafter"/>
</dbReference>
<dbReference type="CDD" id="cd05213">
    <property type="entry name" value="NAD_bind_Glutamyl_tRNA_reduct"/>
    <property type="match status" value="1"/>
</dbReference>
<dbReference type="FunFam" id="3.30.460.30:FF:000001">
    <property type="entry name" value="Glutamyl-tRNA reductase"/>
    <property type="match status" value="1"/>
</dbReference>
<dbReference type="FunFam" id="3.40.50.720:FF:000031">
    <property type="entry name" value="Glutamyl-tRNA reductase"/>
    <property type="match status" value="1"/>
</dbReference>
<dbReference type="Gene3D" id="3.30.460.30">
    <property type="entry name" value="Glutamyl-tRNA reductase, N-terminal domain"/>
    <property type="match status" value="1"/>
</dbReference>
<dbReference type="Gene3D" id="3.40.50.720">
    <property type="entry name" value="NAD(P)-binding Rossmann-like Domain"/>
    <property type="match status" value="1"/>
</dbReference>
<dbReference type="HAMAP" id="MF_00087">
    <property type="entry name" value="Glu_tRNA_reductase"/>
    <property type="match status" value="1"/>
</dbReference>
<dbReference type="InterPro" id="IPR000343">
    <property type="entry name" value="4pyrrol_synth_GluRdtase"/>
</dbReference>
<dbReference type="InterPro" id="IPR015896">
    <property type="entry name" value="4pyrrol_synth_GluRdtase_dimer"/>
</dbReference>
<dbReference type="InterPro" id="IPR015895">
    <property type="entry name" value="4pyrrol_synth_GluRdtase_N"/>
</dbReference>
<dbReference type="InterPro" id="IPR018214">
    <property type="entry name" value="GluRdtase_CS"/>
</dbReference>
<dbReference type="InterPro" id="IPR036453">
    <property type="entry name" value="GluRdtase_dimer_dom_sf"/>
</dbReference>
<dbReference type="InterPro" id="IPR036343">
    <property type="entry name" value="GluRdtase_N_sf"/>
</dbReference>
<dbReference type="InterPro" id="IPR036291">
    <property type="entry name" value="NAD(P)-bd_dom_sf"/>
</dbReference>
<dbReference type="InterPro" id="IPR006151">
    <property type="entry name" value="Shikm_DH/Glu-tRNA_Rdtase"/>
</dbReference>
<dbReference type="NCBIfam" id="TIGR01035">
    <property type="entry name" value="hemA"/>
    <property type="match status" value="1"/>
</dbReference>
<dbReference type="PANTHER" id="PTHR43013">
    <property type="entry name" value="GLUTAMYL-TRNA REDUCTASE"/>
    <property type="match status" value="1"/>
</dbReference>
<dbReference type="PANTHER" id="PTHR43013:SF1">
    <property type="entry name" value="GLUTAMYL-TRNA REDUCTASE"/>
    <property type="match status" value="1"/>
</dbReference>
<dbReference type="Pfam" id="PF00745">
    <property type="entry name" value="GlutR_dimer"/>
    <property type="match status" value="1"/>
</dbReference>
<dbReference type="Pfam" id="PF05201">
    <property type="entry name" value="GlutR_N"/>
    <property type="match status" value="1"/>
</dbReference>
<dbReference type="Pfam" id="PF01488">
    <property type="entry name" value="Shikimate_DH"/>
    <property type="match status" value="1"/>
</dbReference>
<dbReference type="PIRSF" id="PIRSF000445">
    <property type="entry name" value="4pyrrol_synth_GluRdtase"/>
    <property type="match status" value="1"/>
</dbReference>
<dbReference type="SUPFAM" id="SSF69742">
    <property type="entry name" value="Glutamyl tRNA-reductase catalytic, N-terminal domain"/>
    <property type="match status" value="1"/>
</dbReference>
<dbReference type="SUPFAM" id="SSF69075">
    <property type="entry name" value="Glutamyl tRNA-reductase dimerization domain"/>
    <property type="match status" value="1"/>
</dbReference>
<dbReference type="SUPFAM" id="SSF51735">
    <property type="entry name" value="NAD(P)-binding Rossmann-fold domains"/>
    <property type="match status" value="1"/>
</dbReference>
<dbReference type="PROSITE" id="PS00747">
    <property type="entry name" value="GLUTR"/>
    <property type="match status" value="1"/>
</dbReference>
<name>HEM1_ACIB5</name>
<proteinExistence type="inferred from homology"/>